<evidence type="ECO:0000305" key="1"/>
<evidence type="ECO:0007744" key="2">
    <source>
    </source>
</evidence>
<evidence type="ECO:0007829" key="3">
    <source>
        <dbReference type="PDB" id="5LQF"/>
    </source>
</evidence>
<name>CKS2_HUMAN</name>
<sequence length="79" mass="9860">MAHKQIYYSDKYFDEHYEYRHVMLPRELSKQVPKTHLMSEEEWRRLGVQQSLGWVHYMIHEPEPHILLFRRPLPKDQQK</sequence>
<gene>
    <name type="primary">CKS2</name>
</gene>
<accession>P33552</accession>
<accession>Q6FGI9</accession>
<accession>Q6LET5</accession>
<comment type="function">
    <text>Binds to the catalytic subunit of the cyclin dependent kinases and is essential for their biological function.</text>
</comment>
<comment type="subunit">
    <text>Forms a homohexamer that can probably bind six kinase subunits.</text>
</comment>
<comment type="interaction">
    <interactant intactId="EBI-711840">
        <id>P33552</id>
    </interactant>
    <interactant intactId="EBI-1245761">
        <id>Q00526</id>
        <label>CDK3</label>
    </interactant>
    <organismsDiffer>false</organismsDiffer>
    <experiments>6</experiments>
</comment>
<comment type="similarity">
    <text evidence="1">Belongs to the CKS family.</text>
</comment>
<comment type="online information" name="Atlas of Genetics and Cytogenetics in Oncology and Haematology">
    <link uri="https://atlasgeneticsoncology.org/gene/40093/CKS2"/>
</comment>
<protein>
    <recommendedName>
        <fullName>Cyclin-dependent kinases regulatory subunit 2</fullName>
        <shortName>CKS-2</shortName>
    </recommendedName>
</protein>
<feature type="chain" id="PRO_0000206237" description="Cyclin-dependent kinases regulatory subunit 2">
    <location>
        <begin position="1"/>
        <end position="79"/>
    </location>
</feature>
<feature type="modified residue" description="N6-acetyllysine" evidence="2">
    <location>
        <position position="4"/>
    </location>
</feature>
<feature type="sequence conflict" description="In Ref. 4; CAG28558." evidence="1" ref="4">
    <original>R</original>
    <variation>L</variation>
    <location>
        <position position="20"/>
    </location>
</feature>
<feature type="strand" evidence="3">
    <location>
        <begin position="15"/>
        <end position="23"/>
    </location>
</feature>
<feature type="helix" evidence="3">
    <location>
        <begin position="26"/>
        <end position="29"/>
    </location>
</feature>
<feature type="strand" evidence="3">
    <location>
        <begin position="34"/>
        <end position="36"/>
    </location>
</feature>
<feature type="helix" evidence="3">
    <location>
        <begin position="40"/>
        <end position="45"/>
    </location>
</feature>
<feature type="strand" evidence="3">
    <location>
        <begin position="55"/>
        <end position="59"/>
    </location>
</feature>
<feature type="strand" evidence="3">
    <location>
        <begin position="66"/>
        <end position="72"/>
    </location>
</feature>
<organism>
    <name type="scientific">Homo sapiens</name>
    <name type="common">Human</name>
    <dbReference type="NCBI Taxonomy" id="9606"/>
    <lineage>
        <taxon>Eukaryota</taxon>
        <taxon>Metazoa</taxon>
        <taxon>Chordata</taxon>
        <taxon>Craniata</taxon>
        <taxon>Vertebrata</taxon>
        <taxon>Euteleostomi</taxon>
        <taxon>Mammalia</taxon>
        <taxon>Eutheria</taxon>
        <taxon>Euarchontoglires</taxon>
        <taxon>Primates</taxon>
        <taxon>Haplorrhini</taxon>
        <taxon>Catarrhini</taxon>
        <taxon>Hominidae</taxon>
        <taxon>Homo</taxon>
    </lineage>
</organism>
<reference key="1">
    <citation type="journal article" date="1990" name="Genes Dev.">
        <title>Human cDNAs encoding homologs of the small p34Cdc28/Cdc2-associated protein of Saccharomyces cerevisiae and Schizosaccharomyces pombe.</title>
        <authorList>
            <person name="Richardson H.E."/>
            <person name="Stueland C.S."/>
            <person name="Thomas J."/>
            <person name="Russell P."/>
            <person name="Reed S.I."/>
        </authorList>
    </citation>
    <scope>NUCLEOTIDE SEQUENCE [MRNA]</scope>
</reference>
<reference key="2">
    <citation type="submission" date="2002-04" db="EMBL/GenBank/DDBJ databases">
        <authorList>
            <consortium name="NIEHS SNPs program"/>
        </authorList>
    </citation>
    <scope>NUCLEOTIDE SEQUENCE [GENOMIC DNA]</scope>
</reference>
<reference key="3">
    <citation type="submission" date="2003-05" db="EMBL/GenBank/DDBJ databases">
        <title>Cloning of human full-length CDSs in BD Creator(TM) system donor vector.</title>
        <authorList>
            <person name="Kalnine N."/>
            <person name="Chen X."/>
            <person name="Rolfs A."/>
            <person name="Halleck A."/>
            <person name="Hines L."/>
            <person name="Eisenstein S."/>
            <person name="Koundinya M."/>
            <person name="Raphael J."/>
            <person name="Moreira D."/>
            <person name="Kelley T."/>
            <person name="LaBaer J."/>
            <person name="Lin Y."/>
            <person name="Phelan M."/>
            <person name="Farmer A."/>
        </authorList>
    </citation>
    <scope>NUCLEOTIDE SEQUENCE [LARGE SCALE MRNA]</scope>
</reference>
<reference key="4">
    <citation type="submission" date="2004-06" db="EMBL/GenBank/DDBJ databases">
        <title>Cloning of human full open reading frames in Gateway(TM) system entry vector (pDONR201).</title>
        <authorList>
            <person name="Ebert L."/>
            <person name="Schick M."/>
            <person name="Neubert P."/>
            <person name="Schatten R."/>
            <person name="Henze S."/>
            <person name="Korn B."/>
        </authorList>
    </citation>
    <scope>NUCLEOTIDE SEQUENCE [LARGE SCALE MRNA]</scope>
</reference>
<reference key="5">
    <citation type="journal article" date="2004" name="Nature">
        <title>DNA sequence and analysis of human chromosome 9.</title>
        <authorList>
            <person name="Humphray S.J."/>
            <person name="Oliver K."/>
            <person name="Hunt A.R."/>
            <person name="Plumb R.W."/>
            <person name="Loveland J.E."/>
            <person name="Howe K.L."/>
            <person name="Andrews T.D."/>
            <person name="Searle S."/>
            <person name="Hunt S.E."/>
            <person name="Scott C.E."/>
            <person name="Jones M.C."/>
            <person name="Ainscough R."/>
            <person name="Almeida J.P."/>
            <person name="Ambrose K.D."/>
            <person name="Ashwell R.I.S."/>
            <person name="Babbage A.K."/>
            <person name="Babbage S."/>
            <person name="Bagguley C.L."/>
            <person name="Bailey J."/>
            <person name="Banerjee R."/>
            <person name="Barker D.J."/>
            <person name="Barlow K.F."/>
            <person name="Bates K."/>
            <person name="Beasley H."/>
            <person name="Beasley O."/>
            <person name="Bird C.P."/>
            <person name="Bray-Allen S."/>
            <person name="Brown A.J."/>
            <person name="Brown J.Y."/>
            <person name="Burford D."/>
            <person name="Burrill W."/>
            <person name="Burton J."/>
            <person name="Carder C."/>
            <person name="Carter N.P."/>
            <person name="Chapman J.C."/>
            <person name="Chen Y."/>
            <person name="Clarke G."/>
            <person name="Clark S.Y."/>
            <person name="Clee C.M."/>
            <person name="Clegg S."/>
            <person name="Collier R.E."/>
            <person name="Corby N."/>
            <person name="Crosier M."/>
            <person name="Cummings A.T."/>
            <person name="Davies J."/>
            <person name="Dhami P."/>
            <person name="Dunn M."/>
            <person name="Dutta I."/>
            <person name="Dyer L.W."/>
            <person name="Earthrowl M.E."/>
            <person name="Faulkner L."/>
            <person name="Fleming C.J."/>
            <person name="Frankish A."/>
            <person name="Frankland J.A."/>
            <person name="French L."/>
            <person name="Fricker D.G."/>
            <person name="Garner P."/>
            <person name="Garnett J."/>
            <person name="Ghori J."/>
            <person name="Gilbert J.G.R."/>
            <person name="Glison C."/>
            <person name="Grafham D.V."/>
            <person name="Gribble S."/>
            <person name="Griffiths C."/>
            <person name="Griffiths-Jones S."/>
            <person name="Grocock R."/>
            <person name="Guy J."/>
            <person name="Hall R.E."/>
            <person name="Hammond S."/>
            <person name="Harley J.L."/>
            <person name="Harrison E.S.I."/>
            <person name="Hart E.A."/>
            <person name="Heath P.D."/>
            <person name="Henderson C.D."/>
            <person name="Hopkins B.L."/>
            <person name="Howard P.J."/>
            <person name="Howden P.J."/>
            <person name="Huckle E."/>
            <person name="Johnson C."/>
            <person name="Johnson D."/>
            <person name="Joy A.A."/>
            <person name="Kay M."/>
            <person name="Keenan S."/>
            <person name="Kershaw J.K."/>
            <person name="Kimberley A.M."/>
            <person name="King A."/>
            <person name="Knights A."/>
            <person name="Laird G.K."/>
            <person name="Langford C."/>
            <person name="Lawlor S."/>
            <person name="Leongamornlert D.A."/>
            <person name="Leversha M."/>
            <person name="Lloyd C."/>
            <person name="Lloyd D.M."/>
            <person name="Lovell J."/>
            <person name="Martin S."/>
            <person name="Mashreghi-Mohammadi M."/>
            <person name="Matthews L."/>
            <person name="McLaren S."/>
            <person name="McLay K.E."/>
            <person name="McMurray A."/>
            <person name="Milne S."/>
            <person name="Nickerson T."/>
            <person name="Nisbett J."/>
            <person name="Nordsiek G."/>
            <person name="Pearce A.V."/>
            <person name="Peck A.I."/>
            <person name="Porter K.M."/>
            <person name="Pandian R."/>
            <person name="Pelan S."/>
            <person name="Phillimore B."/>
            <person name="Povey S."/>
            <person name="Ramsey Y."/>
            <person name="Rand V."/>
            <person name="Scharfe M."/>
            <person name="Sehra H.K."/>
            <person name="Shownkeen R."/>
            <person name="Sims S.K."/>
            <person name="Skuce C.D."/>
            <person name="Smith M."/>
            <person name="Steward C.A."/>
            <person name="Swarbreck D."/>
            <person name="Sycamore N."/>
            <person name="Tester J."/>
            <person name="Thorpe A."/>
            <person name="Tracey A."/>
            <person name="Tromans A."/>
            <person name="Thomas D.W."/>
            <person name="Wall M."/>
            <person name="Wallis J.M."/>
            <person name="West A.P."/>
            <person name="Whitehead S.L."/>
            <person name="Willey D.L."/>
            <person name="Williams S.A."/>
            <person name="Wilming L."/>
            <person name="Wray P.W."/>
            <person name="Young L."/>
            <person name="Ashurst J.L."/>
            <person name="Coulson A."/>
            <person name="Blocker H."/>
            <person name="Durbin R.M."/>
            <person name="Sulston J.E."/>
            <person name="Hubbard T."/>
            <person name="Jackson M.J."/>
            <person name="Bentley D.R."/>
            <person name="Beck S."/>
            <person name="Rogers J."/>
            <person name="Dunham I."/>
        </authorList>
    </citation>
    <scope>NUCLEOTIDE SEQUENCE [LARGE SCALE GENOMIC DNA]</scope>
</reference>
<reference key="6">
    <citation type="submission" date="2005-07" db="EMBL/GenBank/DDBJ databases">
        <authorList>
            <person name="Mural R.J."/>
            <person name="Istrail S."/>
            <person name="Sutton G."/>
            <person name="Florea L."/>
            <person name="Halpern A.L."/>
            <person name="Mobarry C.M."/>
            <person name="Lippert R."/>
            <person name="Walenz B."/>
            <person name="Shatkay H."/>
            <person name="Dew I."/>
            <person name="Miller J.R."/>
            <person name="Flanigan M.J."/>
            <person name="Edwards N.J."/>
            <person name="Bolanos R."/>
            <person name="Fasulo D."/>
            <person name="Halldorsson B.V."/>
            <person name="Hannenhalli S."/>
            <person name="Turner R."/>
            <person name="Yooseph S."/>
            <person name="Lu F."/>
            <person name="Nusskern D.R."/>
            <person name="Shue B.C."/>
            <person name="Zheng X.H."/>
            <person name="Zhong F."/>
            <person name="Delcher A.L."/>
            <person name="Huson D.H."/>
            <person name="Kravitz S.A."/>
            <person name="Mouchard L."/>
            <person name="Reinert K."/>
            <person name="Remington K.A."/>
            <person name="Clark A.G."/>
            <person name="Waterman M.S."/>
            <person name="Eichler E.E."/>
            <person name="Adams M.D."/>
            <person name="Hunkapiller M.W."/>
            <person name="Myers E.W."/>
            <person name="Venter J.C."/>
        </authorList>
    </citation>
    <scope>NUCLEOTIDE SEQUENCE [LARGE SCALE GENOMIC DNA]</scope>
</reference>
<reference key="7">
    <citation type="journal article" date="2004" name="Genome Res.">
        <title>The status, quality, and expansion of the NIH full-length cDNA project: the Mammalian Gene Collection (MGC).</title>
        <authorList>
            <consortium name="The MGC Project Team"/>
        </authorList>
    </citation>
    <scope>NUCLEOTIDE SEQUENCE [LARGE SCALE MRNA]</scope>
    <source>
        <tissue>Lung</tissue>
    </source>
</reference>
<reference key="8">
    <citation type="journal article" date="2009" name="Science">
        <title>Lysine acetylation targets protein complexes and co-regulates major cellular functions.</title>
        <authorList>
            <person name="Choudhary C."/>
            <person name="Kumar C."/>
            <person name="Gnad F."/>
            <person name="Nielsen M.L."/>
            <person name="Rehman M."/>
            <person name="Walther T.C."/>
            <person name="Olsen J.V."/>
            <person name="Mann M."/>
        </authorList>
    </citation>
    <scope>ACETYLATION [LARGE SCALE ANALYSIS] AT LYS-4</scope>
    <scope>IDENTIFICATION BY MASS SPECTROMETRY [LARGE SCALE ANALYSIS]</scope>
</reference>
<reference key="9">
    <citation type="journal article" date="2011" name="BMC Syst. Biol.">
        <title>Initial characterization of the human central proteome.</title>
        <authorList>
            <person name="Burkard T.R."/>
            <person name="Planyavsky M."/>
            <person name="Kaupe I."/>
            <person name="Breitwieser F.P."/>
            <person name="Buerckstuemmer T."/>
            <person name="Bennett K.L."/>
            <person name="Superti-Furga G."/>
            <person name="Colinge J."/>
        </authorList>
    </citation>
    <scope>IDENTIFICATION BY MASS SPECTROMETRY [LARGE SCALE ANALYSIS]</scope>
</reference>
<reference key="10">
    <citation type="journal article" date="1993" name="Science">
        <title>Human CksHs2 atomic structure: a role for its hexameric assembly in cell cycle control.</title>
        <authorList>
            <person name="Parge H.E."/>
            <person name="Arvai A.S."/>
            <person name="Murtari D.J."/>
            <person name="Reed S.I."/>
            <person name="Tainer J.A."/>
        </authorList>
    </citation>
    <scope>X-RAY CRYSTALLOGRAPHY (2.1 ANGSTROMS)</scope>
</reference>
<dbReference type="EMBL" id="X54942">
    <property type="protein sequence ID" value="CAA38703.1"/>
    <property type="molecule type" value="mRNA"/>
</dbReference>
<dbReference type="EMBL" id="AF506708">
    <property type="protein sequence ID" value="AAM22232.1"/>
    <property type="molecule type" value="Genomic_DNA"/>
</dbReference>
<dbReference type="EMBL" id="BT006630">
    <property type="protein sequence ID" value="AAP35276.1"/>
    <property type="molecule type" value="mRNA"/>
</dbReference>
<dbReference type="EMBL" id="CR407630">
    <property type="protein sequence ID" value="CAG28558.1"/>
    <property type="molecule type" value="mRNA"/>
</dbReference>
<dbReference type="EMBL" id="CR542118">
    <property type="protein sequence ID" value="CAG46915.1"/>
    <property type="molecule type" value="mRNA"/>
</dbReference>
<dbReference type="EMBL" id="AL160054">
    <property type="status" value="NOT_ANNOTATED_CDS"/>
    <property type="molecule type" value="Genomic_DNA"/>
</dbReference>
<dbReference type="EMBL" id="CH471089">
    <property type="protein sequence ID" value="EAW62762.1"/>
    <property type="molecule type" value="Genomic_DNA"/>
</dbReference>
<dbReference type="EMBL" id="BC006458">
    <property type="protein sequence ID" value="AAH06458.1"/>
    <property type="molecule type" value="mRNA"/>
</dbReference>
<dbReference type="CCDS" id="CCDS6682.1"/>
<dbReference type="PIR" id="B36670">
    <property type="entry name" value="B36670"/>
</dbReference>
<dbReference type="RefSeq" id="NP_001818.1">
    <property type="nucleotide sequence ID" value="NM_001827.3"/>
</dbReference>
<dbReference type="PDB" id="1CKS">
    <property type="method" value="X-ray"/>
    <property type="resolution" value="2.10 A"/>
    <property type="chains" value="A/B/C=1-79"/>
</dbReference>
<dbReference type="PDB" id="4Y72">
    <property type="method" value="X-ray"/>
    <property type="resolution" value="2.30 A"/>
    <property type="chains" value="C=1-79"/>
</dbReference>
<dbReference type="PDB" id="4YC3">
    <property type="method" value="X-ray"/>
    <property type="resolution" value="2.70 A"/>
    <property type="chains" value="C=1-79"/>
</dbReference>
<dbReference type="PDB" id="5HQ0">
    <property type="method" value="X-ray"/>
    <property type="resolution" value="2.30 A"/>
    <property type="chains" value="C=1-79"/>
</dbReference>
<dbReference type="PDB" id="5LQF">
    <property type="method" value="X-ray"/>
    <property type="resolution" value="2.06 A"/>
    <property type="chains" value="C/F=1-79"/>
</dbReference>
<dbReference type="PDB" id="6GU2">
    <property type="method" value="X-ray"/>
    <property type="resolution" value="2.00 A"/>
    <property type="chains" value="C=1-79"/>
</dbReference>
<dbReference type="PDB" id="6GU3">
    <property type="method" value="X-ray"/>
    <property type="resolution" value="2.65 A"/>
    <property type="chains" value="C=1-79"/>
</dbReference>
<dbReference type="PDB" id="6GU4">
    <property type="method" value="X-ray"/>
    <property type="resolution" value="2.73 A"/>
    <property type="chains" value="C=1-79"/>
</dbReference>
<dbReference type="PDB" id="6GU6">
    <property type="method" value="X-ray"/>
    <property type="resolution" value="2.33 A"/>
    <property type="chains" value="B=1-79"/>
</dbReference>
<dbReference type="PDB" id="6GU7">
    <property type="method" value="X-ray"/>
    <property type="resolution" value="2.75 A"/>
    <property type="chains" value="B/D/F/H=1-79"/>
</dbReference>
<dbReference type="PDBsum" id="1CKS"/>
<dbReference type="PDBsum" id="4Y72"/>
<dbReference type="PDBsum" id="4YC3"/>
<dbReference type="PDBsum" id="5HQ0"/>
<dbReference type="PDBsum" id="5LQF"/>
<dbReference type="PDBsum" id="6GU2"/>
<dbReference type="PDBsum" id="6GU3"/>
<dbReference type="PDBsum" id="6GU4"/>
<dbReference type="PDBsum" id="6GU6"/>
<dbReference type="PDBsum" id="6GU7"/>
<dbReference type="EMDB" id="EMD-4467"/>
<dbReference type="SMR" id="P33552"/>
<dbReference type="BioGRID" id="107583">
    <property type="interactions" value="50"/>
</dbReference>
<dbReference type="FunCoup" id="P33552">
    <property type="interactions" value="377"/>
</dbReference>
<dbReference type="IntAct" id="P33552">
    <property type="interactions" value="36"/>
</dbReference>
<dbReference type="MINT" id="P33552"/>
<dbReference type="STRING" id="9606.ENSP00000364976"/>
<dbReference type="iPTMnet" id="P33552"/>
<dbReference type="PhosphoSitePlus" id="P33552"/>
<dbReference type="BioMuta" id="CKS2"/>
<dbReference type="jPOST" id="P33552"/>
<dbReference type="MassIVE" id="P33552"/>
<dbReference type="PaxDb" id="9606-ENSP00000364976"/>
<dbReference type="PeptideAtlas" id="P33552"/>
<dbReference type="ProteomicsDB" id="54921"/>
<dbReference type="Pumba" id="P33552"/>
<dbReference type="TopDownProteomics" id="P33552"/>
<dbReference type="Antibodypedia" id="27992">
    <property type="antibodies" value="242 antibodies from 33 providers"/>
</dbReference>
<dbReference type="DNASU" id="1164"/>
<dbReference type="Ensembl" id="ENST00000314355.7">
    <property type="protein sequence ID" value="ENSP00000364976.3"/>
    <property type="gene ID" value="ENSG00000123975.5"/>
</dbReference>
<dbReference type="GeneID" id="1164"/>
<dbReference type="KEGG" id="hsa:1164"/>
<dbReference type="MANE-Select" id="ENST00000314355.7">
    <property type="protein sequence ID" value="ENSP00000364976.3"/>
    <property type="RefSeq nucleotide sequence ID" value="NM_001827.3"/>
    <property type="RefSeq protein sequence ID" value="NP_001818.1"/>
</dbReference>
<dbReference type="UCSC" id="uc004aqh.3">
    <property type="organism name" value="human"/>
</dbReference>
<dbReference type="AGR" id="HGNC:2000"/>
<dbReference type="CTD" id="1164"/>
<dbReference type="DisGeNET" id="1164"/>
<dbReference type="GeneCards" id="CKS2"/>
<dbReference type="HGNC" id="HGNC:2000">
    <property type="gene designation" value="CKS2"/>
</dbReference>
<dbReference type="HPA" id="ENSG00000123975">
    <property type="expression patterns" value="Tissue enhanced (bone marrow, testis)"/>
</dbReference>
<dbReference type="MIM" id="116901">
    <property type="type" value="gene"/>
</dbReference>
<dbReference type="neXtProt" id="NX_P33552"/>
<dbReference type="OpenTargets" id="ENSG00000123975"/>
<dbReference type="PharmGKB" id="PA26536"/>
<dbReference type="VEuPathDB" id="HostDB:ENSG00000123975"/>
<dbReference type="eggNOG" id="KOG3484">
    <property type="taxonomic scope" value="Eukaryota"/>
</dbReference>
<dbReference type="GeneTree" id="ENSGT00950000182971"/>
<dbReference type="HOGENOM" id="CLU_140546_2_0_1"/>
<dbReference type="InParanoid" id="P33552"/>
<dbReference type="OMA" id="MHEPEPH"/>
<dbReference type="OrthoDB" id="440676at2759"/>
<dbReference type="PAN-GO" id="P33552">
    <property type="GO annotations" value="7 GO annotations based on evolutionary models"/>
</dbReference>
<dbReference type="PhylomeDB" id="P33552"/>
<dbReference type="TreeFam" id="TF101142"/>
<dbReference type="PathwayCommons" id="P33552"/>
<dbReference type="SignaLink" id="P33552"/>
<dbReference type="BioGRID-ORCS" id="1164">
    <property type="hits" value="124 hits in 1153 CRISPR screens"/>
</dbReference>
<dbReference type="ChiTaRS" id="CKS2">
    <property type="organism name" value="human"/>
</dbReference>
<dbReference type="EvolutionaryTrace" id="P33552"/>
<dbReference type="GeneWiki" id="CKS2"/>
<dbReference type="GenomeRNAi" id="1164"/>
<dbReference type="Pharos" id="P33552">
    <property type="development level" value="Tbio"/>
</dbReference>
<dbReference type="PRO" id="PR:P33552"/>
<dbReference type="Proteomes" id="UP000005640">
    <property type="component" value="Chromosome 9"/>
</dbReference>
<dbReference type="RNAct" id="P33552">
    <property type="molecule type" value="protein"/>
</dbReference>
<dbReference type="Bgee" id="ENSG00000123975">
    <property type="expression patterns" value="Expressed in ventricular zone and 173 other cell types or tissues"/>
</dbReference>
<dbReference type="GO" id="GO:0000307">
    <property type="term" value="C:cyclin-dependent protein kinase holoenzyme complex"/>
    <property type="evidence" value="ECO:0000318"/>
    <property type="project" value="GO_Central"/>
</dbReference>
<dbReference type="GO" id="GO:0019005">
    <property type="term" value="C:SCF ubiquitin ligase complex"/>
    <property type="evidence" value="ECO:0000318"/>
    <property type="project" value="GO_Central"/>
</dbReference>
<dbReference type="GO" id="GO:0003682">
    <property type="term" value="F:chromatin binding"/>
    <property type="evidence" value="ECO:0007669"/>
    <property type="project" value="Ensembl"/>
</dbReference>
<dbReference type="GO" id="GO:0061575">
    <property type="term" value="F:cyclin-dependent protein serine/threonine kinase activator activity"/>
    <property type="evidence" value="ECO:0000318"/>
    <property type="project" value="GO_Central"/>
</dbReference>
<dbReference type="GO" id="GO:0042393">
    <property type="term" value="F:histone binding"/>
    <property type="evidence" value="ECO:0000318"/>
    <property type="project" value="GO_Central"/>
</dbReference>
<dbReference type="GO" id="GO:0019901">
    <property type="term" value="F:protein kinase binding"/>
    <property type="evidence" value="ECO:0000318"/>
    <property type="project" value="GO_Central"/>
</dbReference>
<dbReference type="GO" id="GO:0043130">
    <property type="term" value="F:ubiquitin binding"/>
    <property type="evidence" value="ECO:0000318"/>
    <property type="project" value="GO_Central"/>
</dbReference>
<dbReference type="GO" id="GO:0051301">
    <property type="term" value="P:cell division"/>
    <property type="evidence" value="ECO:0007669"/>
    <property type="project" value="UniProtKB-KW"/>
</dbReference>
<dbReference type="GO" id="GO:0048144">
    <property type="term" value="P:fibroblast proliferation"/>
    <property type="evidence" value="ECO:0007669"/>
    <property type="project" value="Ensembl"/>
</dbReference>
<dbReference type="GO" id="GO:0007127">
    <property type="term" value="P:meiosis I"/>
    <property type="evidence" value="ECO:0007669"/>
    <property type="project" value="Ensembl"/>
</dbReference>
<dbReference type="GO" id="GO:0044772">
    <property type="term" value="P:mitotic cell cycle phase transition"/>
    <property type="evidence" value="ECO:0007669"/>
    <property type="project" value="Ensembl"/>
</dbReference>
<dbReference type="GO" id="GO:0007346">
    <property type="term" value="P:regulation of mitotic cell cycle"/>
    <property type="evidence" value="ECO:0000318"/>
    <property type="project" value="GO_Central"/>
</dbReference>
<dbReference type="GO" id="GO:0006357">
    <property type="term" value="P:regulation of transcription by RNA polymerase II"/>
    <property type="evidence" value="ECO:0007669"/>
    <property type="project" value="Ensembl"/>
</dbReference>
<dbReference type="FunFam" id="3.30.170.10:FF:000001">
    <property type="entry name" value="Cyclin-dependent kinases regulatory subunit"/>
    <property type="match status" value="1"/>
</dbReference>
<dbReference type="Gene3D" id="3.30.170.10">
    <property type="entry name" value="Cyclin-dependent kinase, regulatory subunit"/>
    <property type="match status" value="1"/>
</dbReference>
<dbReference type="InterPro" id="IPR000789">
    <property type="entry name" value="Cyclin-dep_kinase_reg-sub"/>
</dbReference>
<dbReference type="InterPro" id="IPR036858">
    <property type="entry name" value="Cyclin-dep_kinase_reg-sub_sf"/>
</dbReference>
<dbReference type="PANTHER" id="PTHR23415">
    <property type="entry name" value="CYCLIN-DEPENDENT KINASES REGULATORY SUBUNIT/60S RIBOSOME SUBUNIT BIOGENESIS PROTEIN NIP7"/>
    <property type="match status" value="1"/>
</dbReference>
<dbReference type="Pfam" id="PF01111">
    <property type="entry name" value="CKS"/>
    <property type="match status" value="1"/>
</dbReference>
<dbReference type="PRINTS" id="PR00296">
    <property type="entry name" value="CYCLINKINASE"/>
</dbReference>
<dbReference type="SMART" id="SM01084">
    <property type="entry name" value="CKS"/>
    <property type="match status" value="1"/>
</dbReference>
<dbReference type="SUPFAM" id="SSF55637">
    <property type="entry name" value="Cell cycle regulatory proteins"/>
    <property type="match status" value="1"/>
</dbReference>
<dbReference type="PROSITE" id="PS00944">
    <property type="entry name" value="CKS_1"/>
    <property type="match status" value="1"/>
</dbReference>
<dbReference type="PROSITE" id="PS00945">
    <property type="entry name" value="CKS_2"/>
    <property type="match status" value="1"/>
</dbReference>
<keyword id="KW-0002">3D-structure</keyword>
<keyword id="KW-0007">Acetylation</keyword>
<keyword id="KW-0131">Cell cycle</keyword>
<keyword id="KW-0132">Cell division</keyword>
<keyword id="KW-1267">Proteomics identification</keyword>
<keyword id="KW-1185">Reference proteome</keyword>
<proteinExistence type="evidence at protein level"/>